<protein>
    <recommendedName>
        <fullName evidence="1">Putative pyruvate, phosphate dikinase regulatory protein</fullName>
        <shortName evidence="1">PPDK regulatory protein</shortName>
        <ecNumber evidence="1">2.7.11.32</ecNumber>
        <ecNumber evidence="1">2.7.4.27</ecNumber>
    </recommendedName>
</protein>
<name>PDRP_CLOPS</name>
<reference key="1">
    <citation type="journal article" date="2006" name="Genome Res.">
        <title>Skewed genomic variability in strains of the toxigenic bacterial pathogen, Clostridium perfringens.</title>
        <authorList>
            <person name="Myers G.S.A."/>
            <person name="Rasko D.A."/>
            <person name="Cheung J.K."/>
            <person name="Ravel J."/>
            <person name="Seshadri R."/>
            <person name="DeBoy R.T."/>
            <person name="Ren Q."/>
            <person name="Varga J."/>
            <person name="Awad M.M."/>
            <person name="Brinkac L.M."/>
            <person name="Daugherty S.C."/>
            <person name="Haft D.H."/>
            <person name="Dodson R.J."/>
            <person name="Madupu R."/>
            <person name="Nelson W.C."/>
            <person name="Rosovitz M.J."/>
            <person name="Sullivan S.A."/>
            <person name="Khouri H."/>
            <person name="Dimitrov G.I."/>
            <person name="Watkins K.L."/>
            <person name="Mulligan S."/>
            <person name="Benton J."/>
            <person name="Radune D."/>
            <person name="Fisher D.J."/>
            <person name="Atkins H.S."/>
            <person name="Hiscox T."/>
            <person name="Jost B.H."/>
            <person name="Billington S.J."/>
            <person name="Songer J.G."/>
            <person name="McClane B.A."/>
            <person name="Titball R.W."/>
            <person name="Rood J.I."/>
            <person name="Melville S.B."/>
            <person name="Paulsen I.T."/>
        </authorList>
    </citation>
    <scope>NUCLEOTIDE SEQUENCE [LARGE SCALE GENOMIC DNA]</scope>
    <source>
        <strain>SM101 / Type A</strain>
    </source>
</reference>
<sequence length="266" mass="30197">MLTIFAVSDSIGETAQQVAMAAASQFKDNAEVKRIPYVKSLEDVEDLIKTIEDCEACMIVSTIITVNVREYLTQKCIEKNINIINVLGPIINVASTILNKYPDYNPGAMWNTDETYYKRIEAMEFAMQYDDSKDYRGLKNADVVLVGLSRTSKTPLCMYLANKGIKAINIPLVPEVGVPEELYEIDKKKIFGLTINPLQLIEIRKRRLDKFHRISADIEYASDSRILEEFEFADKILRKIGCRTIDVTQRAIEDTALIIMEKLGVK</sequence>
<keyword id="KW-0418">Kinase</keyword>
<keyword id="KW-0547">Nucleotide-binding</keyword>
<keyword id="KW-0723">Serine/threonine-protein kinase</keyword>
<keyword id="KW-0808">Transferase</keyword>
<organism>
    <name type="scientific">Clostridium perfringens (strain SM101 / Type A)</name>
    <dbReference type="NCBI Taxonomy" id="289380"/>
    <lineage>
        <taxon>Bacteria</taxon>
        <taxon>Bacillati</taxon>
        <taxon>Bacillota</taxon>
        <taxon>Clostridia</taxon>
        <taxon>Eubacteriales</taxon>
        <taxon>Clostridiaceae</taxon>
        <taxon>Clostridium</taxon>
    </lineage>
</organism>
<gene>
    <name type="ordered locus">CPR_0076</name>
</gene>
<dbReference type="EC" id="2.7.11.32" evidence="1"/>
<dbReference type="EC" id="2.7.4.27" evidence="1"/>
<dbReference type="EMBL" id="CP000312">
    <property type="protein sequence ID" value="ABG86996.1"/>
    <property type="molecule type" value="Genomic_DNA"/>
</dbReference>
<dbReference type="RefSeq" id="WP_011591245.1">
    <property type="nucleotide sequence ID" value="NC_008262.1"/>
</dbReference>
<dbReference type="SMR" id="Q0SWW1"/>
<dbReference type="KEGG" id="cpr:CPR_0076"/>
<dbReference type="BioCyc" id="CPER289380:GI76-82-MONOMER"/>
<dbReference type="Proteomes" id="UP000001824">
    <property type="component" value="Chromosome"/>
</dbReference>
<dbReference type="GO" id="GO:0043531">
    <property type="term" value="F:ADP binding"/>
    <property type="evidence" value="ECO:0007669"/>
    <property type="project" value="UniProtKB-UniRule"/>
</dbReference>
<dbReference type="GO" id="GO:0005524">
    <property type="term" value="F:ATP binding"/>
    <property type="evidence" value="ECO:0007669"/>
    <property type="project" value="InterPro"/>
</dbReference>
<dbReference type="GO" id="GO:0016776">
    <property type="term" value="F:phosphotransferase activity, phosphate group as acceptor"/>
    <property type="evidence" value="ECO:0007669"/>
    <property type="project" value="UniProtKB-UniRule"/>
</dbReference>
<dbReference type="GO" id="GO:0004674">
    <property type="term" value="F:protein serine/threonine kinase activity"/>
    <property type="evidence" value="ECO:0007669"/>
    <property type="project" value="UniProtKB-UniRule"/>
</dbReference>
<dbReference type="HAMAP" id="MF_00921">
    <property type="entry name" value="PDRP"/>
    <property type="match status" value="1"/>
</dbReference>
<dbReference type="InterPro" id="IPR005177">
    <property type="entry name" value="Kinase-pyrophosphorylase"/>
</dbReference>
<dbReference type="InterPro" id="IPR026565">
    <property type="entry name" value="PPDK_reg"/>
</dbReference>
<dbReference type="NCBIfam" id="NF003742">
    <property type="entry name" value="PRK05339.1"/>
    <property type="match status" value="1"/>
</dbReference>
<dbReference type="PANTHER" id="PTHR31756">
    <property type="entry name" value="PYRUVATE, PHOSPHATE DIKINASE REGULATORY PROTEIN 1, CHLOROPLASTIC"/>
    <property type="match status" value="1"/>
</dbReference>
<dbReference type="PANTHER" id="PTHR31756:SF3">
    <property type="entry name" value="PYRUVATE, PHOSPHATE DIKINASE REGULATORY PROTEIN 1, CHLOROPLASTIC"/>
    <property type="match status" value="1"/>
</dbReference>
<dbReference type="Pfam" id="PF03618">
    <property type="entry name" value="Kinase-PPPase"/>
    <property type="match status" value="1"/>
</dbReference>
<accession>Q0SWW1</accession>
<proteinExistence type="inferred from homology"/>
<feature type="chain" id="PRO_0000316664" description="Putative pyruvate, phosphate dikinase regulatory protein">
    <location>
        <begin position="1"/>
        <end position="266"/>
    </location>
</feature>
<feature type="binding site" evidence="1">
    <location>
        <begin position="147"/>
        <end position="154"/>
    </location>
    <ligand>
        <name>ADP</name>
        <dbReference type="ChEBI" id="CHEBI:456216"/>
    </ligand>
</feature>
<evidence type="ECO:0000255" key="1">
    <source>
        <dbReference type="HAMAP-Rule" id="MF_00921"/>
    </source>
</evidence>
<comment type="function">
    <text evidence="1">Bifunctional serine/threonine kinase and phosphorylase involved in the regulation of the pyruvate, phosphate dikinase (PPDK) by catalyzing its phosphorylation/dephosphorylation.</text>
</comment>
<comment type="catalytic activity">
    <reaction evidence="1">
        <text>N(tele)-phospho-L-histidyl/L-threonyl-[pyruvate, phosphate dikinase] + ADP = N(tele)-phospho-L-histidyl/O-phospho-L-threonyl-[pyruvate, phosphate dikinase] + AMP + H(+)</text>
        <dbReference type="Rhea" id="RHEA:43692"/>
        <dbReference type="Rhea" id="RHEA-COMP:10650"/>
        <dbReference type="Rhea" id="RHEA-COMP:10651"/>
        <dbReference type="ChEBI" id="CHEBI:15378"/>
        <dbReference type="ChEBI" id="CHEBI:30013"/>
        <dbReference type="ChEBI" id="CHEBI:61977"/>
        <dbReference type="ChEBI" id="CHEBI:83586"/>
        <dbReference type="ChEBI" id="CHEBI:456215"/>
        <dbReference type="ChEBI" id="CHEBI:456216"/>
        <dbReference type="EC" id="2.7.11.32"/>
    </reaction>
</comment>
<comment type="catalytic activity">
    <reaction evidence="1">
        <text>N(tele)-phospho-L-histidyl/O-phospho-L-threonyl-[pyruvate, phosphate dikinase] + phosphate + H(+) = N(tele)-phospho-L-histidyl/L-threonyl-[pyruvate, phosphate dikinase] + diphosphate</text>
        <dbReference type="Rhea" id="RHEA:43696"/>
        <dbReference type="Rhea" id="RHEA-COMP:10650"/>
        <dbReference type="Rhea" id="RHEA-COMP:10651"/>
        <dbReference type="ChEBI" id="CHEBI:15378"/>
        <dbReference type="ChEBI" id="CHEBI:30013"/>
        <dbReference type="ChEBI" id="CHEBI:33019"/>
        <dbReference type="ChEBI" id="CHEBI:43474"/>
        <dbReference type="ChEBI" id="CHEBI:61977"/>
        <dbReference type="ChEBI" id="CHEBI:83586"/>
        <dbReference type="EC" id="2.7.4.27"/>
    </reaction>
</comment>
<comment type="similarity">
    <text evidence="1">Belongs to the pyruvate, phosphate/water dikinase regulatory protein family. PDRP subfamily.</text>
</comment>